<evidence type="ECO:0000255" key="1">
    <source>
        <dbReference type="HAMAP-Rule" id="MF_01620"/>
    </source>
</evidence>
<accession>A0KEL0</accession>
<organism>
    <name type="scientific">Aeromonas hydrophila subsp. hydrophila (strain ATCC 7966 / DSM 30187 / BCRC 13018 / CCUG 14551 / JCM 1027 / KCTC 2358 / NCIMB 9240 / NCTC 8049)</name>
    <dbReference type="NCBI Taxonomy" id="380703"/>
    <lineage>
        <taxon>Bacteria</taxon>
        <taxon>Pseudomonadati</taxon>
        <taxon>Pseudomonadota</taxon>
        <taxon>Gammaproteobacteria</taxon>
        <taxon>Aeromonadales</taxon>
        <taxon>Aeromonadaceae</taxon>
        <taxon>Aeromonas</taxon>
    </lineage>
</organism>
<protein>
    <recommendedName>
        <fullName evidence="1">3-ketoacyl-CoA thiolase</fullName>
        <ecNumber evidence="1">2.3.1.16</ecNumber>
    </recommendedName>
    <alternativeName>
        <fullName evidence="1">Acetyl-CoA acyltransferase</fullName>
    </alternativeName>
    <alternativeName>
        <fullName evidence="1">Beta-ketothiolase</fullName>
    </alternativeName>
    <alternativeName>
        <fullName evidence="1">Fatty acid oxidation complex subunit beta</fullName>
    </alternativeName>
</protein>
<name>FADA_AERHH</name>
<comment type="function">
    <text evidence="1">Catalyzes the final step of fatty acid oxidation in which acetyl-CoA is released and the CoA ester of a fatty acid two carbons shorter is formed.</text>
</comment>
<comment type="catalytic activity">
    <reaction evidence="1">
        <text>an acyl-CoA + acetyl-CoA = a 3-oxoacyl-CoA + CoA</text>
        <dbReference type="Rhea" id="RHEA:21564"/>
        <dbReference type="ChEBI" id="CHEBI:57287"/>
        <dbReference type="ChEBI" id="CHEBI:57288"/>
        <dbReference type="ChEBI" id="CHEBI:58342"/>
        <dbReference type="ChEBI" id="CHEBI:90726"/>
        <dbReference type="EC" id="2.3.1.16"/>
    </reaction>
</comment>
<comment type="pathway">
    <text evidence="1">Lipid metabolism; fatty acid beta-oxidation.</text>
</comment>
<comment type="subunit">
    <text evidence="1">Heterotetramer of two alpha chains (FadB) and two beta chains (FadA).</text>
</comment>
<comment type="subcellular location">
    <subcellularLocation>
        <location evidence="1">Cytoplasm</location>
    </subcellularLocation>
</comment>
<comment type="similarity">
    <text evidence="1">Belongs to the thiolase-like superfamily. Thiolase family.</text>
</comment>
<reference key="1">
    <citation type="journal article" date="2006" name="J. Bacteriol.">
        <title>Genome sequence of Aeromonas hydrophila ATCC 7966T: jack of all trades.</title>
        <authorList>
            <person name="Seshadri R."/>
            <person name="Joseph S.W."/>
            <person name="Chopra A.K."/>
            <person name="Sha J."/>
            <person name="Shaw J."/>
            <person name="Graf J."/>
            <person name="Haft D.H."/>
            <person name="Wu M."/>
            <person name="Ren Q."/>
            <person name="Rosovitz M.J."/>
            <person name="Madupu R."/>
            <person name="Tallon L."/>
            <person name="Kim M."/>
            <person name="Jin S."/>
            <person name="Vuong H."/>
            <person name="Stine O.C."/>
            <person name="Ali A."/>
            <person name="Horneman A.J."/>
            <person name="Heidelberg J.F."/>
        </authorList>
    </citation>
    <scope>NUCLEOTIDE SEQUENCE [LARGE SCALE GENOMIC DNA]</scope>
    <source>
        <strain>ATCC 7966 / DSM 30187 / BCRC 13018 / CCUG 14551 / JCM 1027 / KCTC 2358 / NCIMB 9240 / NCTC 8049</strain>
    </source>
</reference>
<sequence length="387" mass="40900">MKDVVIVDCIRTPMGRSKGGAFRNVRAEDLSAHLMKSILLRNPNLDPNEIEDIYWGCVQQTLEQGFNIARNAALLAGIPKQVGAVTVNRLCGSSMQALHDASRAIQVGDGDIFIIGGVEHMGHVPMSHGVDFHPGMAKSVAKASGMMGLTAEMLGKLHGISRQQQDEFAARSHRRAHAATVEGRFAKEIVGLEGHDASGARFFYDYDEVIRPETTVETLSQLRPVFDPVNGTVTAGTSSALSDGAAAMLVMSADRAKALGLTPRAKIRAMAVAGCDAAIMGYGPVPATQKALKRAGLTIGDIDLFELNEAFAAQSLPCVKDLGLQDVVDEKVNLNGGAIALGHPLGCSGARISTTLLNLMEEKDATLGVATMCIGLGQGIATVFERV</sequence>
<keyword id="KW-0012">Acyltransferase</keyword>
<keyword id="KW-0963">Cytoplasm</keyword>
<keyword id="KW-0276">Fatty acid metabolism</keyword>
<keyword id="KW-0442">Lipid degradation</keyword>
<keyword id="KW-0443">Lipid metabolism</keyword>
<keyword id="KW-1185">Reference proteome</keyword>
<keyword id="KW-0808">Transferase</keyword>
<dbReference type="EC" id="2.3.1.16" evidence="1"/>
<dbReference type="EMBL" id="CP000462">
    <property type="protein sequence ID" value="ABK39512.1"/>
    <property type="molecule type" value="Genomic_DNA"/>
</dbReference>
<dbReference type="RefSeq" id="WP_011704164.1">
    <property type="nucleotide sequence ID" value="NC_008570.1"/>
</dbReference>
<dbReference type="RefSeq" id="YP_854675.1">
    <property type="nucleotide sequence ID" value="NC_008570.1"/>
</dbReference>
<dbReference type="SMR" id="A0KEL0"/>
<dbReference type="STRING" id="380703.AHA_0138"/>
<dbReference type="EnsemblBacteria" id="ABK39512">
    <property type="protein sequence ID" value="ABK39512"/>
    <property type="gene ID" value="AHA_0138"/>
</dbReference>
<dbReference type="GeneID" id="4490319"/>
<dbReference type="KEGG" id="aha:AHA_0138"/>
<dbReference type="PATRIC" id="fig|380703.7.peg.131"/>
<dbReference type="eggNOG" id="COG0183">
    <property type="taxonomic scope" value="Bacteria"/>
</dbReference>
<dbReference type="HOGENOM" id="CLU_031026_2_3_6"/>
<dbReference type="OrthoDB" id="8951704at2"/>
<dbReference type="UniPathway" id="UPA00659"/>
<dbReference type="Proteomes" id="UP000000756">
    <property type="component" value="Chromosome"/>
</dbReference>
<dbReference type="GO" id="GO:0005737">
    <property type="term" value="C:cytoplasm"/>
    <property type="evidence" value="ECO:0007669"/>
    <property type="project" value="UniProtKB-SubCell"/>
</dbReference>
<dbReference type="GO" id="GO:0003988">
    <property type="term" value="F:acetyl-CoA C-acyltransferase activity"/>
    <property type="evidence" value="ECO:0007669"/>
    <property type="project" value="UniProtKB-UniRule"/>
</dbReference>
<dbReference type="GO" id="GO:0006635">
    <property type="term" value="P:fatty acid beta-oxidation"/>
    <property type="evidence" value="ECO:0007669"/>
    <property type="project" value="UniProtKB-UniRule"/>
</dbReference>
<dbReference type="GO" id="GO:0010124">
    <property type="term" value="P:phenylacetate catabolic process"/>
    <property type="evidence" value="ECO:0007669"/>
    <property type="project" value="TreeGrafter"/>
</dbReference>
<dbReference type="CDD" id="cd00751">
    <property type="entry name" value="thiolase"/>
    <property type="match status" value="1"/>
</dbReference>
<dbReference type="FunFam" id="3.40.47.10:FF:000010">
    <property type="entry name" value="Acetyl-CoA acetyltransferase (Thiolase)"/>
    <property type="match status" value="1"/>
</dbReference>
<dbReference type="Gene3D" id="3.40.47.10">
    <property type="match status" value="2"/>
</dbReference>
<dbReference type="HAMAP" id="MF_01620">
    <property type="entry name" value="FadA"/>
    <property type="match status" value="1"/>
</dbReference>
<dbReference type="InterPro" id="IPR012805">
    <property type="entry name" value="FadA"/>
</dbReference>
<dbReference type="InterPro" id="IPR002155">
    <property type="entry name" value="Thiolase"/>
</dbReference>
<dbReference type="InterPro" id="IPR016039">
    <property type="entry name" value="Thiolase-like"/>
</dbReference>
<dbReference type="InterPro" id="IPR050215">
    <property type="entry name" value="Thiolase-like_sf_Thiolase"/>
</dbReference>
<dbReference type="InterPro" id="IPR020615">
    <property type="entry name" value="Thiolase_acyl_enz_int_AS"/>
</dbReference>
<dbReference type="InterPro" id="IPR020610">
    <property type="entry name" value="Thiolase_AS"/>
</dbReference>
<dbReference type="InterPro" id="IPR020617">
    <property type="entry name" value="Thiolase_C"/>
</dbReference>
<dbReference type="InterPro" id="IPR020613">
    <property type="entry name" value="Thiolase_CS"/>
</dbReference>
<dbReference type="InterPro" id="IPR020616">
    <property type="entry name" value="Thiolase_N"/>
</dbReference>
<dbReference type="NCBIfam" id="TIGR01930">
    <property type="entry name" value="AcCoA-C-Actrans"/>
    <property type="match status" value="1"/>
</dbReference>
<dbReference type="NCBIfam" id="TIGR02445">
    <property type="entry name" value="fadA"/>
    <property type="match status" value="1"/>
</dbReference>
<dbReference type="NCBIfam" id="NF006510">
    <property type="entry name" value="PRK08947.1"/>
    <property type="match status" value="1"/>
</dbReference>
<dbReference type="PANTHER" id="PTHR43853:SF11">
    <property type="entry name" value="3-KETOACYL-COA THIOLASE FADA"/>
    <property type="match status" value="1"/>
</dbReference>
<dbReference type="PANTHER" id="PTHR43853">
    <property type="entry name" value="3-KETOACYL-COA THIOLASE, PEROXISOMAL"/>
    <property type="match status" value="1"/>
</dbReference>
<dbReference type="Pfam" id="PF02803">
    <property type="entry name" value="Thiolase_C"/>
    <property type="match status" value="1"/>
</dbReference>
<dbReference type="Pfam" id="PF00108">
    <property type="entry name" value="Thiolase_N"/>
    <property type="match status" value="1"/>
</dbReference>
<dbReference type="PIRSF" id="PIRSF000429">
    <property type="entry name" value="Ac-CoA_Ac_transf"/>
    <property type="match status" value="1"/>
</dbReference>
<dbReference type="SUPFAM" id="SSF53901">
    <property type="entry name" value="Thiolase-like"/>
    <property type="match status" value="2"/>
</dbReference>
<dbReference type="PROSITE" id="PS00098">
    <property type="entry name" value="THIOLASE_1"/>
    <property type="match status" value="1"/>
</dbReference>
<dbReference type="PROSITE" id="PS00737">
    <property type="entry name" value="THIOLASE_2"/>
    <property type="match status" value="1"/>
</dbReference>
<dbReference type="PROSITE" id="PS00099">
    <property type="entry name" value="THIOLASE_3"/>
    <property type="match status" value="1"/>
</dbReference>
<feature type="chain" id="PRO_0000292884" description="3-ketoacyl-CoA thiolase">
    <location>
        <begin position="1"/>
        <end position="387"/>
    </location>
</feature>
<feature type="active site" description="Acyl-thioester intermediate" evidence="1">
    <location>
        <position position="91"/>
    </location>
</feature>
<feature type="active site" description="Proton acceptor" evidence="1">
    <location>
        <position position="343"/>
    </location>
</feature>
<feature type="active site" description="Proton acceptor" evidence="1">
    <location>
        <position position="373"/>
    </location>
</feature>
<proteinExistence type="inferred from homology"/>
<gene>
    <name evidence="1" type="primary">fadA</name>
    <name type="ordered locus">AHA_0138</name>
</gene>